<feature type="chain" id="PRO_0000309161" description="Serine/threonine transporter SstT">
    <location>
        <begin position="1"/>
        <end position="418"/>
    </location>
</feature>
<feature type="transmembrane region" description="Helical" evidence="1">
    <location>
        <begin position="21"/>
        <end position="41"/>
    </location>
</feature>
<feature type="transmembrane region" description="Helical" evidence="1">
    <location>
        <begin position="49"/>
        <end position="69"/>
    </location>
</feature>
<feature type="transmembrane region" description="Helical" evidence="1">
    <location>
        <begin position="83"/>
        <end position="103"/>
    </location>
</feature>
<feature type="transmembrane region" description="Helical" evidence="1">
    <location>
        <begin position="142"/>
        <end position="162"/>
    </location>
</feature>
<feature type="transmembrane region" description="Helical" evidence="1">
    <location>
        <begin position="190"/>
        <end position="210"/>
    </location>
</feature>
<feature type="transmembrane region" description="Helical" evidence="1">
    <location>
        <begin position="217"/>
        <end position="237"/>
    </location>
</feature>
<feature type="transmembrane region" description="Helical" evidence="1">
    <location>
        <begin position="299"/>
        <end position="319"/>
    </location>
</feature>
<feature type="transmembrane region" description="Helical" evidence="1">
    <location>
        <begin position="331"/>
        <end position="351"/>
    </location>
</feature>
<protein>
    <recommendedName>
        <fullName evidence="1">Serine/threonine transporter SstT</fullName>
    </recommendedName>
    <alternativeName>
        <fullName evidence="1">Na(+)/serine-threonine symporter</fullName>
    </alternativeName>
</protein>
<dbReference type="EMBL" id="CP000668">
    <property type="protein sequence ID" value="ABP38786.1"/>
    <property type="status" value="ALT_INIT"/>
    <property type="molecule type" value="Genomic_DNA"/>
</dbReference>
<dbReference type="RefSeq" id="WP_002216063.1">
    <property type="nucleotide sequence ID" value="NZ_CP009715.1"/>
</dbReference>
<dbReference type="SMR" id="A4THM4"/>
<dbReference type="GeneID" id="57974032"/>
<dbReference type="KEGG" id="ypp:YPDSF_0371"/>
<dbReference type="PATRIC" id="fig|386656.14.peg.1674"/>
<dbReference type="GO" id="GO:0005886">
    <property type="term" value="C:plasma membrane"/>
    <property type="evidence" value="ECO:0007669"/>
    <property type="project" value="UniProtKB-SubCell"/>
</dbReference>
<dbReference type="GO" id="GO:0005295">
    <property type="term" value="F:neutral L-amino acid:sodium symporter activity"/>
    <property type="evidence" value="ECO:0007669"/>
    <property type="project" value="TreeGrafter"/>
</dbReference>
<dbReference type="GO" id="GO:0032329">
    <property type="term" value="P:serine transport"/>
    <property type="evidence" value="ECO:0007669"/>
    <property type="project" value="InterPro"/>
</dbReference>
<dbReference type="GO" id="GO:0015826">
    <property type="term" value="P:threonine transport"/>
    <property type="evidence" value="ECO:0007669"/>
    <property type="project" value="InterPro"/>
</dbReference>
<dbReference type="FunFam" id="1.10.3860.10:FF:000003">
    <property type="entry name" value="Serine/threonine transporter sstT"/>
    <property type="match status" value="1"/>
</dbReference>
<dbReference type="Gene3D" id="1.10.3860.10">
    <property type="entry name" value="Sodium:dicarboxylate symporter"/>
    <property type="match status" value="1"/>
</dbReference>
<dbReference type="HAMAP" id="MF_01582">
    <property type="entry name" value="Ser_Thr_transp_SstT"/>
    <property type="match status" value="1"/>
</dbReference>
<dbReference type="InterPro" id="IPR001991">
    <property type="entry name" value="Na-dicarboxylate_symporter"/>
</dbReference>
<dbReference type="InterPro" id="IPR036458">
    <property type="entry name" value="Na:dicarbo_symporter_sf"/>
</dbReference>
<dbReference type="InterPro" id="IPR023025">
    <property type="entry name" value="Ser_Thr_transp_SstT"/>
</dbReference>
<dbReference type="NCBIfam" id="NF010151">
    <property type="entry name" value="PRK13628.1"/>
    <property type="match status" value="1"/>
</dbReference>
<dbReference type="PANTHER" id="PTHR42865">
    <property type="entry name" value="PROTON/GLUTAMATE-ASPARTATE SYMPORTER"/>
    <property type="match status" value="1"/>
</dbReference>
<dbReference type="PANTHER" id="PTHR42865:SF8">
    <property type="entry name" value="SERINE_THREONINE TRANSPORTER SSTT"/>
    <property type="match status" value="1"/>
</dbReference>
<dbReference type="Pfam" id="PF00375">
    <property type="entry name" value="SDF"/>
    <property type="match status" value="1"/>
</dbReference>
<dbReference type="PRINTS" id="PR00173">
    <property type="entry name" value="EDTRNSPORT"/>
</dbReference>
<dbReference type="SUPFAM" id="SSF118215">
    <property type="entry name" value="Proton glutamate symport protein"/>
    <property type="match status" value="1"/>
</dbReference>
<evidence type="ECO:0000255" key="1">
    <source>
        <dbReference type="HAMAP-Rule" id="MF_01582"/>
    </source>
</evidence>
<evidence type="ECO:0000305" key="2"/>
<proteinExistence type="inferred from homology"/>
<reference key="1">
    <citation type="submission" date="2007-02" db="EMBL/GenBank/DDBJ databases">
        <title>Complete sequence of chromosome of Yersinia pestis Pestoides F.</title>
        <authorList>
            <consortium name="US DOE Joint Genome Institute"/>
            <person name="Copeland A."/>
            <person name="Lucas S."/>
            <person name="Lapidus A."/>
            <person name="Barry K."/>
            <person name="Detter J.C."/>
            <person name="Glavina del Rio T."/>
            <person name="Hammon N."/>
            <person name="Israni S."/>
            <person name="Dalin E."/>
            <person name="Tice H."/>
            <person name="Pitluck S."/>
            <person name="Di Bartolo G."/>
            <person name="Chain P."/>
            <person name="Malfatti S."/>
            <person name="Shin M."/>
            <person name="Vergez L."/>
            <person name="Schmutz J."/>
            <person name="Larimer F."/>
            <person name="Land M."/>
            <person name="Hauser L."/>
            <person name="Worsham P."/>
            <person name="Chu M."/>
            <person name="Bearden S."/>
            <person name="Garcia E."/>
            <person name="Richardson P."/>
        </authorList>
    </citation>
    <scope>NUCLEOTIDE SEQUENCE [LARGE SCALE GENOMIC DNA]</scope>
    <source>
        <strain>Pestoides F</strain>
    </source>
</reference>
<sequence length="418" mass="43202">MEKTQSVFIRFIVNGSLVKQILIGLVAGIVLALVSTPAAIAVGLLGSLFVGALKAVAPVLVLMLVIASIANHKKGQKTSIRPILFLYVLGTFSAALVAVVVSFIYPSTLILVAESADITPPSGIVEVLHGLLNSIIANPIHALLNANYIGILAWAVGLGIALRHAADTTKALINDMSDAVTLVVRVVIRFAPLGIFGLVASTIAATGFGALQLYAQLLVVLIGCMLLVALVVNPLIVYWKIRRNPYPLVFACLRESGVTAFFTRSSAANIPVNMEMCKKMNLNEDTYSISIPLGATINMAGAAITITVLTLAAVHTLGITVDLPTALLLSVVAAICACGASGVAGGSLLLIPLACSMFGIPNDVAMQVVGVGFIIGVLQDSAETALNSSTDVLFTAAVCQAEDAKLANPDPLAAGKSV</sequence>
<comment type="function">
    <text evidence="1">Involved in the import of serine and threonine into the cell, with the concomitant import of sodium (symport system).</text>
</comment>
<comment type="catalytic activity">
    <reaction evidence="1">
        <text>L-serine(in) + Na(+)(in) = L-serine(out) + Na(+)(out)</text>
        <dbReference type="Rhea" id="RHEA:29575"/>
        <dbReference type="ChEBI" id="CHEBI:29101"/>
        <dbReference type="ChEBI" id="CHEBI:33384"/>
    </reaction>
    <physiologicalReaction direction="right-to-left" evidence="1">
        <dbReference type="Rhea" id="RHEA:29577"/>
    </physiologicalReaction>
</comment>
<comment type="catalytic activity">
    <reaction evidence="1">
        <text>L-threonine(in) + Na(+)(in) = L-threonine(out) + Na(+)(out)</text>
        <dbReference type="Rhea" id="RHEA:69999"/>
        <dbReference type="ChEBI" id="CHEBI:29101"/>
        <dbReference type="ChEBI" id="CHEBI:57926"/>
    </reaction>
    <physiologicalReaction direction="right-to-left" evidence="1">
        <dbReference type="Rhea" id="RHEA:70001"/>
    </physiologicalReaction>
</comment>
<comment type="subcellular location">
    <subcellularLocation>
        <location evidence="1">Cell inner membrane</location>
        <topology evidence="1">Multi-pass membrane protein</topology>
    </subcellularLocation>
</comment>
<comment type="similarity">
    <text evidence="1">Belongs to the dicarboxylate/amino acid:cation symporter (DAACS) (TC 2.A.23) family.</text>
</comment>
<comment type="sequence caution" evidence="2">
    <conflict type="erroneous initiation">
        <sequence resource="EMBL-CDS" id="ABP38786"/>
    </conflict>
</comment>
<organism>
    <name type="scientific">Yersinia pestis (strain Pestoides F)</name>
    <dbReference type="NCBI Taxonomy" id="386656"/>
    <lineage>
        <taxon>Bacteria</taxon>
        <taxon>Pseudomonadati</taxon>
        <taxon>Pseudomonadota</taxon>
        <taxon>Gammaproteobacteria</taxon>
        <taxon>Enterobacterales</taxon>
        <taxon>Yersiniaceae</taxon>
        <taxon>Yersinia</taxon>
    </lineage>
</organism>
<keyword id="KW-0029">Amino-acid transport</keyword>
<keyword id="KW-0997">Cell inner membrane</keyword>
<keyword id="KW-1003">Cell membrane</keyword>
<keyword id="KW-0472">Membrane</keyword>
<keyword id="KW-0769">Symport</keyword>
<keyword id="KW-0812">Transmembrane</keyword>
<keyword id="KW-1133">Transmembrane helix</keyword>
<keyword id="KW-0813">Transport</keyword>
<gene>
    <name evidence="1" type="primary">sstT</name>
    <name type="ordered locus">YPDSF_0371</name>
</gene>
<accession>A4THM4</accession>
<name>SSTT_YERPP</name>